<dbReference type="EMBL" id="CP000568">
    <property type="protein sequence ID" value="ABN53919.1"/>
    <property type="molecule type" value="Genomic_DNA"/>
</dbReference>
<dbReference type="RefSeq" id="WP_003515021.1">
    <property type="nucleotide sequence ID" value="NC_009012.1"/>
</dbReference>
<dbReference type="SMR" id="A3DIZ0"/>
<dbReference type="STRING" id="203119.Cthe_2720"/>
<dbReference type="GeneID" id="35806082"/>
<dbReference type="KEGG" id="cth:Cthe_2720"/>
<dbReference type="eggNOG" id="COG0080">
    <property type="taxonomic scope" value="Bacteria"/>
</dbReference>
<dbReference type="HOGENOM" id="CLU_074237_2_1_9"/>
<dbReference type="OrthoDB" id="9802408at2"/>
<dbReference type="Proteomes" id="UP000002145">
    <property type="component" value="Chromosome"/>
</dbReference>
<dbReference type="GO" id="GO:0022625">
    <property type="term" value="C:cytosolic large ribosomal subunit"/>
    <property type="evidence" value="ECO:0007669"/>
    <property type="project" value="TreeGrafter"/>
</dbReference>
<dbReference type="GO" id="GO:0070180">
    <property type="term" value="F:large ribosomal subunit rRNA binding"/>
    <property type="evidence" value="ECO:0007669"/>
    <property type="project" value="UniProtKB-UniRule"/>
</dbReference>
<dbReference type="GO" id="GO:0003735">
    <property type="term" value="F:structural constituent of ribosome"/>
    <property type="evidence" value="ECO:0007669"/>
    <property type="project" value="InterPro"/>
</dbReference>
<dbReference type="GO" id="GO:0006412">
    <property type="term" value="P:translation"/>
    <property type="evidence" value="ECO:0007669"/>
    <property type="project" value="UniProtKB-UniRule"/>
</dbReference>
<dbReference type="CDD" id="cd00349">
    <property type="entry name" value="Ribosomal_L11"/>
    <property type="match status" value="1"/>
</dbReference>
<dbReference type="FunFam" id="1.10.10.250:FF:000001">
    <property type="entry name" value="50S ribosomal protein L11"/>
    <property type="match status" value="1"/>
</dbReference>
<dbReference type="FunFam" id="3.30.1550.10:FF:000001">
    <property type="entry name" value="50S ribosomal protein L11"/>
    <property type="match status" value="1"/>
</dbReference>
<dbReference type="Gene3D" id="1.10.10.250">
    <property type="entry name" value="Ribosomal protein L11, C-terminal domain"/>
    <property type="match status" value="1"/>
</dbReference>
<dbReference type="Gene3D" id="3.30.1550.10">
    <property type="entry name" value="Ribosomal protein L11/L12, N-terminal domain"/>
    <property type="match status" value="1"/>
</dbReference>
<dbReference type="HAMAP" id="MF_00736">
    <property type="entry name" value="Ribosomal_uL11"/>
    <property type="match status" value="1"/>
</dbReference>
<dbReference type="InterPro" id="IPR000911">
    <property type="entry name" value="Ribosomal_uL11"/>
</dbReference>
<dbReference type="InterPro" id="IPR006519">
    <property type="entry name" value="Ribosomal_uL11_bac-typ"/>
</dbReference>
<dbReference type="InterPro" id="IPR020783">
    <property type="entry name" value="Ribosomal_uL11_C"/>
</dbReference>
<dbReference type="InterPro" id="IPR036769">
    <property type="entry name" value="Ribosomal_uL11_C_sf"/>
</dbReference>
<dbReference type="InterPro" id="IPR020784">
    <property type="entry name" value="Ribosomal_uL11_N"/>
</dbReference>
<dbReference type="InterPro" id="IPR036796">
    <property type="entry name" value="Ribosomal_uL11_N_sf"/>
</dbReference>
<dbReference type="NCBIfam" id="TIGR01632">
    <property type="entry name" value="L11_bact"/>
    <property type="match status" value="1"/>
</dbReference>
<dbReference type="PANTHER" id="PTHR11661">
    <property type="entry name" value="60S RIBOSOMAL PROTEIN L12"/>
    <property type="match status" value="1"/>
</dbReference>
<dbReference type="PANTHER" id="PTHR11661:SF1">
    <property type="entry name" value="LARGE RIBOSOMAL SUBUNIT PROTEIN UL11M"/>
    <property type="match status" value="1"/>
</dbReference>
<dbReference type="Pfam" id="PF00298">
    <property type="entry name" value="Ribosomal_L11"/>
    <property type="match status" value="1"/>
</dbReference>
<dbReference type="Pfam" id="PF03946">
    <property type="entry name" value="Ribosomal_L11_N"/>
    <property type="match status" value="1"/>
</dbReference>
<dbReference type="SMART" id="SM00649">
    <property type="entry name" value="RL11"/>
    <property type="match status" value="1"/>
</dbReference>
<dbReference type="SUPFAM" id="SSF54747">
    <property type="entry name" value="Ribosomal L11/L12e N-terminal domain"/>
    <property type="match status" value="1"/>
</dbReference>
<dbReference type="SUPFAM" id="SSF46906">
    <property type="entry name" value="Ribosomal protein L11, C-terminal domain"/>
    <property type="match status" value="1"/>
</dbReference>
<keyword id="KW-0488">Methylation</keyword>
<keyword id="KW-1185">Reference proteome</keyword>
<keyword id="KW-0687">Ribonucleoprotein</keyword>
<keyword id="KW-0689">Ribosomal protein</keyword>
<keyword id="KW-0694">RNA-binding</keyword>
<keyword id="KW-0699">rRNA-binding</keyword>
<name>RL11_ACET2</name>
<proteinExistence type="inferred from homology"/>
<sequence length="141" mass="15039">MAKKVVGYIKLQIPAGKATPAPPVGPALGQHGVNIMAFCKEFNERTAKDAGLVIPVVITVYADRSFSFVTKTPPASVLIKRACKIEKGSGRPNREKVAKISKEEVRKIAEMKMPDLNAASLEAAMSMIAGTARSMGVVVED</sequence>
<evidence type="ECO:0000255" key="1">
    <source>
        <dbReference type="HAMAP-Rule" id="MF_00736"/>
    </source>
</evidence>
<evidence type="ECO:0000305" key="2"/>
<organism>
    <name type="scientific">Acetivibrio thermocellus (strain ATCC 27405 / DSM 1237 / JCM 9322 / NBRC 103400 / NCIMB 10682 / NRRL B-4536 / VPI 7372)</name>
    <name type="common">Clostridium thermocellum</name>
    <dbReference type="NCBI Taxonomy" id="203119"/>
    <lineage>
        <taxon>Bacteria</taxon>
        <taxon>Bacillati</taxon>
        <taxon>Bacillota</taxon>
        <taxon>Clostridia</taxon>
        <taxon>Eubacteriales</taxon>
        <taxon>Oscillospiraceae</taxon>
        <taxon>Acetivibrio</taxon>
    </lineage>
</organism>
<feature type="chain" id="PRO_1000046171" description="Large ribosomal subunit protein uL11">
    <location>
        <begin position="1"/>
        <end position="141"/>
    </location>
</feature>
<accession>A3DIZ0</accession>
<comment type="function">
    <text evidence="1">Forms part of the ribosomal stalk which helps the ribosome interact with GTP-bound translation factors.</text>
</comment>
<comment type="subunit">
    <text evidence="1">Part of the ribosomal stalk of the 50S ribosomal subunit. Interacts with L10 and the large rRNA to form the base of the stalk. L10 forms an elongated spine to which L12 dimers bind in a sequential fashion forming a multimeric L10(L12)X complex.</text>
</comment>
<comment type="PTM">
    <text evidence="1">One or more lysine residues are methylated.</text>
</comment>
<comment type="similarity">
    <text evidence="1">Belongs to the universal ribosomal protein uL11 family.</text>
</comment>
<gene>
    <name evidence="1" type="primary">rplK</name>
    <name type="ordered locus">Cthe_2720</name>
</gene>
<reference key="1">
    <citation type="submission" date="2007-02" db="EMBL/GenBank/DDBJ databases">
        <title>Complete sequence of Clostridium thermocellum ATCC 27405.</title>
        <authorList>
            <consortium name="US DOE Joint Genome Institute"/>
            <person name="Copeland A."/>
            <person name="Lucas S."/>
            <person name="Lapidus A."/>
            <person name="Barry K."/>
            <person name="Detter J.C."/>
            <person name="Glavina del Rio T."/>
            <person name="Hammon N."/>
            <person name="Israni S."/>
            <person name="Dalin E."/>
            <person name="Tice H."/>
            <person name="Pitluck S."/>
            <person name="Chertkov O."/>
            <person name="Brettin T."/>
            <person name="Bruce D."/>
            <person name="Han C."/>
            <person name="Tapia R."/>
            <person name="Gilna P."/>
            <person name="Schmutz J."/>
            <person name="Larimer F."/>
            <person name="Land M."/>
            <person name="Hauser L."/>
            <person name="Kyrpides N."/>
            <person name="Mikhailova N."/>
            <person name="Wu J.H.D."/>
            <person name="Newcomb M."/>
            <person name="Richardson P."/>
        </authorList>
    </citation>
    <scope>NUCLEOTIDE SEQUENCE [LARGE SCALE GENOMIC DNA]</scope>
    <source>
        <strain>ATCC 27405 / DSM 1237 / JCM 9322 / NBRC 103400 / NCIMB 10682 / NRRL B-4536 / VPI 7372</strain>
    </source>
</reference>
<protein>
    <recommendedName>
        <fullName evidence="1">Large ribosomal subunit protein uL11</fullName>
    </recommendedName>
    <alternativeName>
        <fullName evidence="2">50S ribosomal protein L11</fullName>
    </alternativeName>
</protein>